<organism>
    <name type="scientific">Burkholderia mallei (strain NCTC 10229)</name>
    <dbReference type="NCBI Taxonomy" id="412022"/>
    <lineage>
        <taxon>Bacteria</taxon>
        <taxon>Pseudomonadati</taxon>
        <taxon>Pseudomonadota</taxon>
        <taxon>Betaproteobacteria</taxon>
        <taxon>Burkholderiales</taxon>
        <taxon>Burkholderiaceae</taxon>
        <taxon>Burkholderia</taxon>
        <taxon>pseudomallei group</taxon>
    </lineage>
</organism>
<feature type="chain" id="PRO_1000005900" description="DNA-directed RNA polymerase subunit omega">
    <location>
        <begin position="1"/>
        <end position="67"/>
    </location>
</feature>
<comment type="function">
    <text evidence="1">Promotes RNA polymerase assembly. Latches the N- and C-terminal regions of the beta' subunit thereby facilitating its interaction with the beta and alpha subunits.</text>
</comment>
<comment type="catalytic activity">
    <reaction evidence="1">
        <text>RNA(n) + a ribonucleoside 5'-triphosphate = RNA(n+1) + diphosphate</text>
        <dbReference type="Rhea" id="RHEA:21248"/>
        <dbReference type="Rhea" id="RHEA-COMP:14527"/>
        <dbReference type="Rhea" id="RHEA-COMP:17342"/>
        <dbReference type="ChEBI" id="CHEBI:33019"/>
        <dbReference type="ChEBI" id="CHEBI:61557"/>
        <dbReference type="ChEBI" id="CHEBI:140395"/>
        <dbReference type="EC" id="2.7.7.6"/>
    </reaction>
</comment>
<comment type="subunit">
    <text evidence="1">The RNAP catalytic core consists of 2 alpha, 1 beta, 1 beta' and 1 omega subunit. When a sigma factor is associated with the core the holoenzyme is formed, which can initiate transcription.</text>
</comment>
<comment type="similarity">
    <text evidence="1">Belongs to the RNA polymerase subunit omega family.</text>
</comment>
<evidence type="ECO:0000255" key="1">
    <source>
        <dbReference type="HAMAP-Rule" id="MF_00366"/>
    </source>
</evidence>
<proteinExistence type="inferred from homology"/>
<keyword id="KW-0240">DNA-directed RNA polymerase</keyword>
<keyword id="KW-0548">Nucleotidyltransferase</keyword>
<keyword id="KW-0804">Transcription</keyword>
<keyword id="KW-0808">Transferase</keyword>
<name>RPOZ_BURM9</name>
<sequence>MARITVEDCLKQIPNRFELALAATYRARQLAQGHTPKIESRDKPTVVALREIAAGQVGVEMLKKVPA</sequence>
<reference key="1">
    <citation type="journal article" date="2010" name="Genome Biol. Evol.">
        <title>Continuing evolution of Burkholderia mallei through genome reduction and large-scale rearrangements.</title>
        <authorList>
            <person name="Losada L."/>
            <person name="Ronning C.M."/>
            <person name="DeShazer D."/>
            <person name="Woods D."/>
            <person name="Fedorova N."/>
            <person name="Kim H.S."/>
            <person name="Shabalina S.A."/>
            <person name="Pearson T.R."/>
            <person name="Brinkac L."/>
            <person name="Tan P."/>
            <person name="Nandi T."/>
            <person name="Crabtree J."/>
            <person name="Badger J."/>
            <person name="Beckstrom-Sternberg S."/>
            <person name="Saqib M."/>
            <person name="Schutzer S.E."/>
            <person name="Keim P."/>
            <person name="Nierman W.C."/>
        </authorList>
    </citation>
    <scope>NUCLEOTIDE SEQUENCE [LARGE SCALE GENOMIC DNA]</scope>
    <source>
        <strain>NCTC 10229</strain>
    </source>
</reference>
<gene>
    <name evidence="1" type="primary">rpoZ</name>
    <name type="ordered locus">BMA10229_A2649</name>
</gene>
<protein>
    <recommendedName>
        <fullName evidence="1">DNA-directed RNA polymerase subunit omega</fullName>
        <shortName evidence="1">RNAP omega subunit</shortName>
        <ecNumber evidence="1">2.7.7.6</ecNumber>
    </recommendedName>
    <alternativeName>
        <fullName evidence="1">RNA polymerase omega subunit</fullName>
    </alternativeName>
    <alternativeName>
        <fullName evidence="1">Transcriptase subunit omega</fullName>
    </alternativeName>
</protein>
<accession>A2S9I5</accession>
<dbReference type="EC" id="2.7.7.6" evidence="1"/>
<dbReference type="EMBL" id="CP000546">
    <property type="protein sequence ID" value="ABN01680.1"/>
    <property type="molecule type" value="Genomic_DNA"/>
</dbReference>
<dbReference type="RefSeq" id="WP_004185855.1">
    <property type="nucleotide sequence ID" value="NC_008836.1"/>
</dbReference>
<dbReference type="SMR" id="A2S9I5"/>
<dbReference type="GeneID" id="93061155"/>
<dbReference type="KEGG" id="bml:BMA10229_A2649"/>
<dbReference type="HOGENOM" id="CLU_125406_5_2_4"/>
<dbReference type="Proteomes" id="UP000002283">
    <property type="component" value="Chromosome I"/>
</dbReference>
<dbReference type="GO" id="GO:0000428">
    <property type="term" value="C:DNA-directed RNA polymerase complex"/>
    <property type="evidence" value="ECO:0007669"/>
    <property type="project" value="UniProtKB-KW"/>
</dbReference>
<dbReference type="GO" id="GO:0003677">
    <property type="term" value="F:DNA binding"/>
    <property type="evidence" value="ECO:0007669"/>
    <property type="project" value="UniProtKB-UniRule"/>
</dbReference>
<dbReference type="GO" id="GO:0003899">
    <property type="term" value="F:DNA-directed RNA polymerase activity"/>
    <property type="evidence" value="ECO:0007669"/>
    <property type="project" value="UniProtKB-UniRule"/>
</dbReference>
<dbReference type="GO" id="GO:0006351">
    <property type="term" value="P:DNA-templated transcription"/>
    <property type="evidence" value="ECO:0007669"/>
    <property type="project" value="UniProtKB-UniRule"/>
</dbReference>
<dbReference type="Gene3D" id="3.90.940.10">
    <property type="match status" value="1"/>
</dbReference>
<dbReference type="HAMAP" id="MF_00366">
    <property type="entry name" value="RNApol_bact_RpoZ"/>
    <property type="match status" value="1"/>
</dbReference>
<dbReference type="InterPro" id="IPR003716">
    <property type="entry name" value="DNA-dir_RNA_pol_omega"/>
</dbReference>
<dbReference type="InterPro" id="IPR006110">
    <property type="entry name" value="Pol_omega/Rpo6/RPB6"/>
</dbReference>
<dbReference type="InterPro" id="IPR036161">
    <property type="entry name" value="RPB6/omega-like_sf"/>
</dbReference>
<dbReference type="NCBIfam" id="TIGR00690">
    <property type="entry name" value="rpoZ"/>
    <property type="match status" value="1"/>
</dbReference>
<dbReference type="PANTHER" id="PTHR34476">
    <property type="entry name" value="DNA-DIRECTED RNA POLYMERASE SUBUNIT OMEGA"/>
    <property type="match status" value="1"/>
</dbReference>
<dbReference type="PANTHER" id="PTHR34476:SF1">
    <property type="entry name" value="DNA-DIRECTED RNA POLYMERASE SUBUNIT OMEGA"/>
    <property type="match status" value="1"/>
</dbReference>
<dbReference type="Pfam" id="PF01192">
    <property type="entry name" value="RNA_pol_Rpb6"/>
    <property type="match status" value="1"/>
</dbReference>
<dbReference type="SMART" id="SM01409">
    <property type="entry name" value="RNA_pol_Rpb6"/>
    <property type="match status" value="1"/>
</dbReference>
<dbReference type="SUPFAM" id="SSF63562">
    <property type="entry name" value="RPB6/omega subunit-like"/>
    <property type="match status" value="1"/>
</dbReference>